<comment type="catalytic activity">
    <reaction evidence="1">
        <text>1-(5-phospho-beta-D-ribosyl)-5-[(5-phospho-beta-D-ribosylamino)methylideneamino]imidazole-4-carboxamide = 5-[(5-phospho-1-deoxy-D-ribulos-1-ylimino)methylamino]-1-(5-phospho-beta-D-ribosyl)imidazole-4-carboxamide</text>
        <dbReference type="Rhea" id="RHEA:15469"/>
        <dbReference type="ChEBI" id="CHEBI:58435"/>
        <dbReference type="ChEBI" id="CHEBI:58525"/>
        <dbReference type="EC" id="5.3.1.16"/>
    </reaction>
</comment>
<comment type="pathway">
    <text evidence="1">Amino-acid biosynthesis; L-histidine biosynthesis; L-histidine from 5-phospho-alpha-D-ribose 1-diphosphate: step 4/9.</text>
</comment>
<comment type="subcellular location">
    <subcellularLocation>
        <location evidence="1">Cytoplasm</location>
    </subcellularLocation>
</comment>
<comment type="similarity">
    <text evidence="1">Belongs to the HisA/HisF family.</text>
</comment>
<reference key="1">
    <citation type="journal article" date="2007" name="Genome Res.">
        <title>Genome characteristics of facultatively symbiotic Frankia sp. strains reflect host range and host plant biogeography.</title>
        <authorList>
            <person name="Normand P."/>
            <person name="Lapierre P."/>
            <person name="Tisa L.S."/>
            <person name="Gogarten J.P."/>
            <person name="Alloisio N."/>
            <person name="Bagnarol E."/>
            <person name="Bassi C.A."/>
            <person name="Berry A.M."/>
            <person name="Bickhart D.M."/>
            <person name="Choisne N."/>
            <person name="Couloux A."/>
            <person name="Cournoyer B."/>
            <person name="Cruveiller S."/>
            <person name="Daubin V."/>
            <person name="Demange N."/>
            <person name="Francino M.P."/>
            <person name="Goltsman E."/>
            <person name="Huang Y."/>
            <person name="Kopp O.R."/>
            <person name="Labarre L."/>
            <person name="Lapidus A."/>
            <person name="Lavire C."/>
            <person name="Marechal J."/>
            <person name="Martinez M."/>
            <person name="Mastronunzio J.E."/>
            <person name="Mullin B.C."/>
            <person name="Niemann J."/>
            <person name="Pujic P."/>
            <person name="Rawnsley T."/>
            <person name="Rouy Z."/>
            <person name="Schenowitz C."/>
            <person name="Sellstedt A."/>
            <person name="Tavares F."/>
            <person name="Tomkins J.P."/>
            <person name="Vallenet D."/>
            <person name="Valverde C."/>
            <person name="Wall L.G."/>
            <person name="Wang Y."/>
            <person name="Medigue C."/>
            <person name="Benson D.R."/>
        </authorList>
    </citation>
    <scope>NUCLEOTIDE SEQUENCE [LARGE SCALE GENOMIC DNA]</scope>
    <source>
        <strain>DSM 45986 / CECT 9034 / ACN14a</strain>
    </source>
</reference>
<organism>
    <name type="scientific">Frankia alni (strain DSM 45986 / CECT 9034 / ACN14a)</name>
    <dbReference type="NCBI Taxonomy" id="326424"/>
    <lineage>
        <taxon>Bacteria</taxon>
        <taxon>Bacillati</taxon>
        <taxon>Actinomycetota</taxon>
        <taxon>Actinomycetes</taxon>
        <taxon>Frankiales</taxon>
        <taxon>Frankiaceae</taxon>
        <taxon>Frankia</taxon>
    </lineage>
</organism>
<evidence type="ECO:0000255" key="1">
    <source>
        <dbReference type="HAMAP-Rule" id="MF_01014"/>
    </source>
</evidence>
<keyword id="KW-0028">Amino-acid biosynthesis</keyword>
<keyword id="KW-0963">Cytoplasm</keyword>
<keyword id="KW-0368">Histidine biosynthesis</keyword>
<keyword id="KW-0413">Isomerase</keyword>
<keyword id="KW-1185">Reference proteome</keyword>
<dbReference type="EC" id="5.3.1.16" evidence="1"/>
<dbReference type="EMBL" id="CT573213">
    <property type="protein sequence ID" value="CAJ63618.1"/>
    <property type="molecule type" value="Genomic_DNA"/>
</dbReference>
<dbReference type="SMR" id="Q0RFX1"/>
<dbReference type="STRING" id="326424.FRAAL4977"/>
<dbReference type="KEGG" id="fal:FRAAL4977"/>
<dbReference type="eggNOG" id="COG0106">
    <property type="taxonomic scope" value="Bacteria"/>
</dbReference>
<dbReference type="HOGENOM" id="CLU_048577_1_1_11"/>
<dbReference type="UniPathway" id="UPA00031">
    <property type="reaction ID" value="UER00009"/>
</dbReference>
<dbReference type="Proteomes" id="UP000000657">
    <property type="component" value="Chromosome"/>
</dbReference>
<dbReference type="GO" id="GO:0005737">
    <property type="term" value="C:cytoplasm"/>
    <property type="evidence" value="ECO:0007669"/>
    <property type="project" value="UniProtKB-SubCell"/>
</dbReference>
<dbReference type="GO" id="GO:0003949">
    <property type="term" value="F:1-(5-phosphoribosyl)-5-[(5-phosphoribosylamino)methylideneamino]imidazole-4-carboxamide isomerase activity"/>
    <property type="evidence" value="ECO:0007669"/>
    <property type="project" value="UniProtKB-UniRule"/>
</dbReference>
<dbReference type="GO" id="GO:0004640">
    <property type="term" value="F:phosphoribosylanthranilate isomerase activity"/>
    <property type="evidence" value="ECO:0007669"/>
    <property type="project" value="InterPro"/>
</dbReference>
<dbReference type="GO" id="GO:0000105">
    <property type="term" value="P:L-histidine biosynthetic process"/>
    <property type="evidence" value="ECO:0007669"/>
    <property type="project" value="UniProtKB-UniRule"/>
</dbReference>
<dbReference type="GO" id="GO:0000162">
    <property type="term" value="P:L-tryptophan biosynthetic process"/>
    <property type="evidence" value="ECO:0007669"/>
    <property type="project" value="InterPro"/>
</dbReference>
<dbReference type="CDD" id="cd04732">
    <property type="entry name" value="HisA"/>
    <property type="match status" value="1"/>
</dbReference>
<dbReference type="FunFam" id="3.20.20.70:FF:000009">
    <property type="entry name" value="1-(5-phosphoribosyl)-5-[(5-phosphoribosylamino)methylideneamino] imidazole-4-carboxamide isomerase"/>
    <property type="match status" value="1"/>
</dbReference>
<dbReference type="Gene3D" id="3.20.20.70">
    <property type="entry name" value="Aldolase class I"/>
    <property type="match status" value="1"/>
</dbReference>
<dbReference type="HAMAP" id="MF_01014">
    <property type="entry name" value="HisA"/>
    <property type="match status" value="1"/>
</dbReference>
<dbReference type="InterPro" id="IPR013785">
    <property type="entry name" value="Aldolase_TIM"/>
</dbReference>
<dbReference type="InterPro" id="IPR006062">
    <property type="entry name" value="His_biosynth"/>
</dbReference>
<dbReference type="InterPro" id="IPR010188">
    <property type="entry name" value="HisA/PriA_Actinobacteria"/>
</dbReference>
<dbReference type="InterPro" id="IPR044524">
    <property type="entry name" value="Isoase_HisA-like"/>
</dbReference>
<dbReference type="InterPro" id="IPR023016">
    <property type="entry name" value="Isoase_HisA-like_bact"/>
</dbReference>
<dbReference type="InterPro" id="IPR011060">
    <property type="entry name" value="RibuloseP-bd_barrel"/>
</dbReference>
<dbReference type="NCBIfam" id="TIGR01919">
    <property type="entry name" value="hisA-trpF"/>
    <property type="match status" value="1"/>
</dbReference>
<dbReference type="PANTHER" id="PTHR43090">
    <property type="entry name" value="1-(5-PHOSPHORIBOSYL)-5-[(5-PHOSPHORIBOSYLAMINO)METHYLIDENEAMINO] IMIDAZOLE-4-CARBOXAMIDE ISOMERASE"/>
    <property type="match status" value="1"/>
</dbReference>
<dbReference type="PANTHER" id="PTHR43090:SF2">
    <property type="entry name" value="1-(5-PHOSPHORIBOSYL)-5-[(5-PHOSPHORIBOSYLAMINO)METHYLIDENEAMINO] IMIDAZOLE-4-CARBOXAMIDE ISOMERASE"/>
    <property type="match status" value="1"/>
</dbReference>
<dbReference type="Pfam" id="PF00977">
    <property type="entry name" value="His_biosynth"/>
    <property type="match status" value="1"/>
</dbReference>
<dbReference type="SUPFAM" id="SSF51366">
    <property type="entry name" value="Ribulose-phoshate binding barrel"/>
    <property type="match status" value="1"/>
</dbReference>
<accession>Q0RFX1</accession>
<proteinExistence type="inferred from homology"/>
<sequence>MAGVTLTLLPAVDVADGRAVRLVQGEAGSETSYGDPLEAALTWQRDGAEWIHLVDLDAAFGRGSNRELIAEVVRSVDVAVELSGGIRDDDSLDAALATGAARVNIGTAALEDPDWVRRAIDRVGDRIAVGLDVRGTTLAARGWTQDGGELFEVLARLDADGCARYVVTDVRRDGTLTGPNVELLRSVTAVTDRPVVASGGVSALADLVAIAAVPGVEGAIVGKALYAGAFTLPEALAVTSTVVAG</sequence>
<name>HIS4_FRAAA</name>
<gene>
    <name evidence="1" type="primary">hisA</name>
    <name type="ordered locus">FRAAL4977</name>
</gene>
<protein>
    <recommendedName>
        <fullName evidence="1">1-(5-phosphoribosyl)-5-[(5-phosphoribosylamino)methylideneamino] imidazole-4-carboxamide isomerase</fullName>
        <ecNumber evidence="1">5.3.1.16</ecNumber>
    </recommendedName>
    <alternativeName>
        <fullName evidence="1">Phosphoribosylformimino-5-aminoimidazole carboxamide ribotide isomerase</fullName>
    </alternativeName>
</protein>
<feature type="chain" id="PRO_0000290475" description="1-(5-phosphoribosyl)-5-[(5-phosphoribosylamino)methylideneamino] imidazole-4-carboxamide isomerase">
    <location>
        <begin position="1"/>
        <end position="245"/>
    </location>
</feature>
<feature type="active site" description="Proton acceptor" evidence="1">
    <location>
        <position position="13"/>
    </location>
</feature>
<feature type="active site" description="Proton donor" evidence="1">
    <location>
        <position position="132"/>
    </location>
</feature>